<evidence type="ECO:0000255" key="1"/>
<evidence type="ECO:0000269" key="2">
    <source>
    </source>
</evidence>
<evidence type="ECO:0000303" key="3">
    <source>
    </source>
</evidence>
<evidence type="ECO:0000305" key="4"/>
<evidence type="ECO:0000305" key="5">
    <source>
    </source>
</evidence>
<sequence length="188" mass="21594">MRQYCLLLIVLALAAALSDNAVASTLAVARSEIGAPSAVYSERLLRSEPQDEDTFEDRAFGLNWLRLRWLRLGAAKAKTTDVISARESKWIEAWANKNLSPNYVYKQLGLAKQGDKAMQSQNYRIFEAYTERLFAKDQALYTKWLDAKMTPEDVYKALKLDKLLGAKAANSPDFRRYEVYMFKWHELN</sequence>
<proteinExistence type="evidence at protein level"/>
<keyword id="KW-1032">Host cell membrane</keyword>
<keyword id="KW-1043">Host membrane</keyword>
<keyword id="KW-0472">Membrane</keyword>
<keyword id="KW-1185">Reference proteome</keyword>
<keyword id="KW-0964">Secreted</keyword>
<keyword id="KW-0732">Signal</keyword>
<keyword id="KW-0843">Virulence</keyword>
<gene>
    <name evidence="3" type="primary">Avh241</name>
    <name type="ORF">PHYSODRAFT_288810</name>
</gene>
<feature type="signal peptide" evidence="1">
    <location>
        <begin position="1"/>
        <end position="16"/>
    </location>
</feature>
<feature type="chain" id="PRO_5003473069" description="RxLR effector protein Avh241">
    <location>
        <begin position="17"/>
        <end position="188"/>
    </location>
</feature>
<feature type="short sequence motif" description="RxLR-dEER" evidence="5">
    <location>
        <begin position="43"/>
        <end position="58"/>
    </location>
</feature>
<feature type="short sequence motif" description="Host plasma membrane localization motif" evidence="2">
    <location>
        <begin position="73"/>
        <end position="78"/>
    </location>
</feature>
<feature type="mutagenesis site" description="Impairs the localization to the host plasma membrane and lowers cell death-inducing activity." evidence="2">
    <original>GAAKAK</original>
    <variation>AAAAAA</variation>
    <location>
        <begin position="73"/>
        <end position="78"/>
    </location>
</feature>
<comment type="function">
    <text evidence="2">Effector that triggers cell death in a variety of plant species (including tobacco, tomato and soybean), regardless of the Rps genes present (PubMed:22816601). Avh241 interacts with the plant immune system via at least two different mechanisms, one recognized by plants dependent on subcellular localization and one promoting infection independent on membrane localization (PubMed:22816601). The cell death triggered by Avh241 in N.benthamiana requires the two host mitogen-activated protein kinases, MEK2 and WIPK (PubMed:22816601).</text>
</comment>
<comment type="subcellular location">
    <subcellularLocation>
        <location evidence="2">Secreted</location>
    </subcellularLocation>
    <subcellularLocation>
        <location evidence="2">Host cell membrane</location>
    </subcellularLocation>
</comment>
<comment type="domain">
    <text evidence="5">The RxLR-dEER motif acts to carry the protein into the host cell cytoplasm through binding to cell surface phosphatidylinositol-3-phosphate.</text>
</comment>
<comment type="domain">
    <text evidence="2">The GAAKAK motif at position 73-78 is required for host plasma membrane localization.</text>
</comment>
<comment type="similarity">
    <text evidence="4">Belongs to the RxLR effector family.</text>
</comment>
<protein>
    <recommendedName>
        <fullName evidence="3">RxLR effector protein Avh241</fullName>
    </recommendedName>
    <alternativeName>
        <fullName evidence="3">Avirulence homolog protein 241</fullName>
    </alternativeName>
</protein>
<reference key="1">
    <citation type="journal article" date="2006" name="Science">
        <title>Phytophthora genome sequences uncover evolutionary origins and mechanisms of pathogenesis.</title>
        <authorList>
            <person name="Tyler B.M."/>
            <person name="Tripathy S."/>
            <person name="Zhang X."/>
            <person name="Dehal P."/>
            <person name="Jiang R.H.Y."/>
            <person name="Aerts A."/>
            <person name="Arredondo F.D."/>
            <person name="Baxter L."/>
            <person name="Bensasson D."/>
            <person name="Beynon J.L."/>
            <person name="Chapman J."/>
            <person name="Damasceno C.M.B."/>
            <person name="Dorrance A.E."/>
            <person name="Dou D."/>
            <person name="Dickerman A.W."/>
            <person name="Dubchak I.L."/>
            <person name="Garbelotto M."/>
            <person name="Gijzen M."/>
            <person name="Gordon S.G."/>
            <person name="Govers F."/>
            <person name="Grunwald N.J."/>
            <person name="Huang W."/>
            <person name="Ivors K.L."/>
            <person name="Jones R.W."/>
            <person name="Kamoun S."/>
            <person name="Krampis K."/>
            <person name="Lamour K.H."/>
            <person name="Lee M.-K."/>
            <person name="McDonald W.H."/>
            <person name="Medina M."/>
            <person name="Meijer H.J.G."/>
            <person name="Nordberg E.K."/>
            <person name="Maclean D.J."/>
            <person name="Ospina-Giraldo M.D."/>
            <person name="Morris P.F."/>
            <person name="Phuntumart V."/>
            <person name="Putnam N.H."/>
            <person name="Rash S."/>
            <person name="Rose J.K.C."/>
            <person name="Sakihama Y."/>
            <person name="Salamov A.A."/>
            <person name="Savidor A."/>
            <person name="Scheuring C.F."/>
            <person name="Smith B.M."/>
            <person name="Sobral B.W.S."/>
            <person name="Terry A."/>
            <person name="Torto-Alalibo T.A."/>
            <person name="Win J."/>
            <person name="Xu Z."/>
            <person name="Zhang H."/>
            <person name="Grigoriev I.V."/>
            <person name="Rokhsar D.S."/>
            <person name="Boore J.L."/>
        </authorList>
    </citation>
    <scope>NUCLEOTIDE SEQUENCE [LARGE SCALE GENOMIC DNA]</scope>
    <source>
        <strain>P6497</strain>
    </source>
</reference>
<reference key="2">
    <citation type="journal article" date="2011" name="Plant Cell">
        <title>Transcriptional programming and functional interactions within the Phytophthora sojae RXLR effector repertoire.</title>
        <authorList>
            <person name="Wang Q."/>
            <person name="Han C."/>
            <person name="Ferreira A.O."/>
            <person name="Yu X."/>
            <person name="Ye W."/>
            <person name="Tripathy S."/>
            <person name="Kale S.D."/>
            <person name="Gu B."/>
            <person name="Sheng Y."/>
            <person name="Sui Y."/>
            <person name="Wang X."/>
            <person name="Zhang Z."/>
            <person name="Cheng B."/>
            <person name="Dong S."/>
            <person name="Shan W."/>
            <person name="Zheng X."/>
            <person name="Dou D."/>
            <person name="Tyler B.M."/>
            <person name="Wang Y."/>
        </authorList>
    </citation>
    <scope>IDENTIFICATION</scope>
    <scope>DOMAIN</scope>
</reference>
<reference key="3">
    <citation type="journal article" date="2012" name="New Phytol.">
        <title>The RxLR effector Avh241 from Phytophthora sojae requires plasma membrane localization to induce plant cell death.</title>
        <authorList>
            <person name="Yu X."/>
            <person name="Tang J."/>
            <person name="Wang Q."/>
            <person name="Ye W."/>
            <person name="Tao K."/>
            <person name="Duan S."/>
            <person name="Lu C."/>
            <person name="Yang X."/>
            <person name="Dong S."/>
            <person name="Zheng X."/>
            <person name="Wang Y."/>
        </authorList>
    </citation>
    <scope>FUNCTION</scope>
    <scope>SUBCELLULAR LOCATION</scope>
    <scope>DOMAIN</scope>
    <scope>MUTAGENESIS OF 73-GLY--LYS-78</scope>
</reference>
<name>AV241_PHYSP</name>
<organism>
    <name type="scientific">Phytophthora sojae (strain P6497)</name>
    <name type="common">Soybean stem and root rot agent</name>
    <name type="synonym">Phytophthora megasperma f. sp. glycines</name>
    <dbReference type="NCBI Taxonomy" id="1094619"/>
    <lineage>
        <taxon>Eukaryota</taxon>
        <taxon>Sar</taxon>
        <taxon>Stramenopiles</taxon>
        <taxon>Oomycota</taxon>
        <taxon>Peronosporales</taxon>
        <taxon>Peronosporaceae</taxon>
        <taxon>Phytophthora</taxon>
    </lineage>
</organism>
<accession>G5A8D2</accession>
<dbReference type="EMBL" id="JH159161">
    <property type="protein sequence ID" value="EGZ08158.1"/>
    <property type="molecule type" value="Genomic_DNA"/>
</dbReference>
<dbReference type="RefSeq" id="XP_009536330.1">
    <property type="nucleotide sequence ID" value="XM_009538035.1"/>
</dbReference>
<dbReference type="SMR" id="G5A8D2"/>
<dbReference type="STRING" id="1094619.G5A8D2"/>
<dbReference type="EnsemblProtists" id="EGZ08158">
    <property type="protein sequence ID" value="EGZ08158"/>
    <property type="gene ID" value="PHYSODRAFT_288810"/>
</dbReference>
<dbReference type="GeneID" id="20640716"/>
<dbReference type="KEGG" id="psoj:PHYSODRAFT_288810"/>
<dbReference type="InParanoid" id="G5A8D2"/>
<dbReference type="OMA" id="ESKWIEA"/>
<dbReference type="Proteomes" id="UP000002640">
    <property type="component" value="Unassembled WGS sequence"/>
</dbReference>
<dbReference type="GO" id="GO:0005576">
    <property type="term" value="C:extracellular region"/>
    <property type="evidence" value="ECO:0007669"/>
    <property type="project" value="UniProtKB-SubCell"/>
</dbReference>
<dbReference type="GO" id="GO:0020002">
    <property type="term" value="C:host cell plasma membrane"/>
    <property type="evidence" value="ECO:0007669"/>
    <property type="project" value="UniProtKB-SubCell"/>
</dbReference>
<dbReference type="GO" id="GO:0016020">
    <property type="term" value="C:membrane"/>
    <property type="evidence" value="ECO:0007669"/>
    <property type="project" value="UniProtKB-KW"/>
</dbReference>
<dbReference type="InterPro" id="IPR031825">
    <property type="entry name" value="RXLR"/>
</dbReference>
<dbReference type="Pfam" id="PF16810">
    <property type="entry name" value="RXLR"/>
    <property type="match status" value="1"/>
</dbReference>